<organism>
    <name type="scientific">Vesicomyosocius okutanii subsp. Calyptogena okutanii (strain HA)</name>
    <dbReference type="NCBI Taxonomy" id="412965"/>
    <lineage>
        <taxon>Bacteria</taxon>
        <taxon>Pseudomonadati</taxon>
        <taxon>Pseudomonadota</taxon>
        <taxon>Gammaproteobacteria</taxon>
        <taxon>Candidatus Pseudothioglobaceae</taxon>
        <taxon>Candidatus Vesicomyosocius</taxon>
    </lineage>
</organism>
<name>GPMI_VESOH</name>
<reference key="1">
    <citation type="journal article" date="2007" name="Curr. Biol.">
        <title>Reduced genome of the thioautotrophic intracellular symbiont in a deep-sea clam, Calyptogena okutanii.</title>
        <authorList>
            <person name="Kuwahara H."/>
            <person name="Yoshida T."/>
            <person name="Takaki Y."/>
            <person name="Shimamura S."/>
            <person name="Nishi S."/>
            <person name="Harada M."/>
            <person name="Matsuyama K."/>
            <person name="Takishita K."/>
            <person name="Kawato M."/>
            <person name="Uematsu K."/>
            <person name="Fujiwara Y."/>
            <person name="Sato T."/>
            <person name="Kato C."/>
            <person name="Kitagawa M."/>
            <person name="Kato I."/>
            <person name="Maruyama T."/>
        </authorList>
    </citation>
    <scope>NUCLEOTIDE SEQUENCE [LARGE SCALE GENOMIC DNA]</scope>
    <source>
        <strain>HA</strain>
    </source>
</reference>
<proteinExistence type="inferred from homology"/>
<protein>
    <recommendedName>
        <fullName evidence="1">2,3-bisphosphoglycerate-independent phosphoglycerate mutase</fullName>
        <shortName evidence="1">BPG-independent PGAM</shortName>
        <shortName evidence="1">Phosphoglyceromutase</shortName>
        <shortName evidence="1">iPGM</shortName>
        <ecNumber evidence="1">5.4.2.12</ecNumber>
    </recommendedName>
</protein>
<dbReference type="EC" id="5.4.2.12" evidence="1"/>
<dbReference type="EMBL" id="AP009247">
    <property type="protein sequence ID" value="BAF62068.1"/>
    <property type="molecule type" value="Genomic_DNA"/>
</dbReference>
<dbReference type="RefSeq" id="WP_011930337.1">
    <property type="nucleotide sequence ID" value="NC_009465.1"/>
</dbReference>
<dbReference type="SMR" id="A5CVF0"/>
<dbReference type="STRING" id="412965.COSY_0969"/>
<dbReference type="KEGG" id="vok:COSY_0969"/>
<dbReference type="eggNOG" id="COG0696">
    <property type="taxonomic scope" value="Bacteria"/>
</dbReference>
<dbReference type="HOGENOM" id="CLU_026099_2_0_6"/>
<dbReference type="OrthoDB" id="9800863at2"/>
<dbReference type="UniPathway" id="UPA00109">
    <property type="reaction ID" value="UER00186"/>
</dbReference>
<dbReference type="Proteomes" id="UP000000247">
    <property type="component" value="Chromosome"/>
</dbReference>
<dbReference type="GO" id="GO:0005829">
    <property type="term" value="C:cytosol"/>
    <property type="evidence" value="ECO:0007669"/>
    <property type="project" value="TreeGrafter"/>
</dbReference>
<dbReference type="GO" id="GO:0030145">
    <property type="term" value="F:manganese ion binding"/>
    <property type="evidence" value="ECO:0007669"/>
    <property type="project" value="UniProtKB-UniRule"/>
</dbReference>
<dbReference type="GO" id="GO:0004619">
    <property type="term" value="F:phosphoglycerate mutase activity"/>
    <property type="evidence" value="ECO:0007669"/>
    <property type="project" value="UniProtKB-EC"/>
</dbReference>
<dbReference type="GO" id="GO:0006007">
    <property type="term" value="P:glucose catabolic process"/>
    <property type="evidence" value="ECO:0007669"/>
    <property type="project" value="InterPro"/>
</dbReference>
<dbReference type="GO" id="GO:0006096">
    <property type="term" value="P:glycolytic process"/>
    <property type="evidence" value="ECO:0007669"/>
    <property type="project" value="UniProtKB-UniRule"/>
</dbReference>
<dbReference type="CDD" id="cd16010">
    <property type="entry name" value="iPGM"/>
    <property type="match status" value="1"/>
</dbReference>
<dbReference type="FunFam" id="3.40.1450.10:FF:000002">
    <property type="entry name" value="2,3-bisphosphoglycerate-independent phosphoglycerate mutase"/>
    <property type="match status" value="1"/>
</dbReference>
<dbReference type="Gene3D" id="3.40.720.10">
    <property type="entry name" value="Alkaline Phosphatase, subunit A"/>
    <property type="match status" value="1"/>
</dbReference>
<dbReference type="Gene3D" id="3.40.1450.10">
    <property type="entry name" value="BPG-independent phosphoglycerate mutase, domain B"/>
    <property type="match status" value="1"/>
</dbReference>
<dbReference type="HAMAP" id="MF_01038">
    <property type="entry name" value="GpmI"/>
    <property type="match status" value="1"/>
</dbReference>
<dbReference type="InterPro" id="IPR017850">
    <property type="entry name" value="Alkaline_phosphatase_core_sf"/>
</dbReference>
<dbReference type="InterPro" id="IPR011258">
    <property type="entry name" value="BPG-indep_PGM_N"/>
</dbReference>
<dbReference type="InterPro" id="IPR006124">
    <property type="entry name" value="Metalloenzyme"/>
</dbReference>
<dbReference type="InterPro" id="IPR036646">
    <property type="entry name" value="PGAM_B_sf"/>
</dbReference>
<dbReference type="InterPro" id="IPR005995">
    <property type="entry name" value="Pgm_bpd_ind"/>
</dbReference>
<dbReference type="NCBIfam" id="TIGR01307">
    <property type="entry name" value="pgm_bpd_ind"/>
    <property type="match status" value="1"/>
</dbReference>
<dbReference type="PANTHER" id="PTHR31637">
    <property type="entry name" value="2,3-BISPHOSPHOGLYCERATE-INDEPENDENT PHOSPHOGLYCERATE MUTASE"/>
    <property type="match status" value="1"/>
</dbReference>
<dbReference type="PANTHER" id="PTHR31637:SF0">
    <property type="entry name" value="2,3-BISPHOSPHOGLYCERATE-INDEPENDENT PHOSPHOGLYCERATE MUTASE"/>
    <property type="match status" value="1"/>
</dbReference>
<dbReference type="Pfam" id="PF06415">
    <property type="entry name" value="iPGM_N"/>
    <property type="match status" value="1"/>
</dbReference>
<dbReference type="Pfam" id="PF01676">
    <property type="entry name" value="Metalloenzyme"/>
    <property type="match status" value="1"/>
</dbReference>
<dbReference type="PIRSF" id="PIRSF001492">
    <property type="entry name" value="IPGAM"/>
    <property type="match status" value="1"/>
</dbReference>
<dbReference type="SUPFAM" id="SSF64158">
    <property type="entry name" value="2,3-Bisphosphoglycerate-independent phosphoglycerate mutase, substrate-binding domain"/>
    <property type="match status" value="1"/>
</dbReference>
<dbReference type="SUPFAM" id="SSF53649">
    <property type="entry name" value="Alkaline phosphatase-like"/>
    <property type="match status" value="1"/>
</dbReference>
<feature type="chain" id="PRO_1000064016" description="2,3-bisphosphoglycerate-independent phosphoglycerate mutase">
    <location>
        <begin position="1"/>
        <end position="512"/>
    </location>
</feature>
<feature type="active site" description="Phosphoserine intermediate" evidence="1">
    <location>
        <position position="64"/>
    </location>
</feature>
<feature type="binding site" evidence="1">
    <location>
        <position position="14"/>
    </location>
    <ligand>
        <name>Mn(2+)</name>
        <dbReference type="ChEBI" id="CHEBI:29035"/>
        <label>2</label>
    </ligand>
</feature>
<feature type="binding site" evidence="1">
    <location>
        <position position="64"/>
    </location>
    <ligand>
        <name>Mn(2+)</name>
        <dbReference type="ChEBI" id="CHEBI:29035"/>
        <label>2</label>
    </ligand>
</feature>
<feature type="binding site" evidence="1">
    <location>
        <position position="125"/>
    </location>
    <ligand>
        <name>substrate</name>
    </ligand>
</feature>
<feature type="binding site" evidence="1">
    <location>
        <begin position="155"/>
        <end position="156"/>
    </location>
    <ligand>
        <name>substrate</name>
    </ligand>
</feature>
<feature type="binding site" evidence="1">
    <location>
        <position position="187"/>
    </location>
    <ligand>
        <name>substrate</name>
    </ligand>
</feature>
<feature type="binding site" evidence="1">
    <location>
        <position position="193"/>
    </location>
    <ligand>
        <name>substrate</name>
    </ligand>
</feature>
<feature type="binding site" evidence="1">
    <location>
        <begin position="259"/>
        <end position="262"/>
    </location>
    <ligand>
        <name>substrate</name>
    </ligand>
</feature>
<feature type="binding site" evidence="1">
    <location>
        <position position="332"/>
    </location>
    <ligand>
        <name>substrate</name>
    </ligand>
</feature>
<feature type="binding site" evidence="1">
    <location>
        <position position="399"/>
    </location>
    <ligand>
        <name>Mn(2+)</name>
        <dbReference type="ChEBI" id="CHEBI:29035"/>
        <label>1</label>
    </ligand>
</feature>
<feature type="binding site" evidence="1">
    <location>
        <position position="403"/>
    </location>
    <ligand>
        <name>Mn(2+)</name>
        <dbReference type="ChEBI" id="CHEBI:29035"/>
        <label>1</label>
    </ligand>
</feature>
<feature type="binding site" evidence="1">
    <location>
        <position position="440"/>
    </location>
    <ligand>
        <name>Mn(2+)</name>
        <dbReference type="ChEBI" id="CHEBI:29035"/>
        <label>2</label>
    </ligand>
</feature>
<feature type="binding site" evidence="1">
    <location>
        <position position="441"/>
    </location>
    <ligand>
        <name>Mn(2+)</name>
        <dbReference type="ChEBI" id="CHEBI:29035"/>
        <label>2</label>
    </ligand>
</feature>
<feature type="binding site" evidence="1">
    <location>
        <position position="459"/>
    </location>
    <ligand>
        <name>Mn(2+)</name>
        <dbReference type="ChEBI" id="CHEBI:29035"/>
        <label>1</label>
    </ligand>
</feature>
<accession>A5CVF0</accession>
<sequence>MKSKKQTKLLLILDGWGYSKTTKNNAIALANTSVWDRLNQTFPHSLIHTSGKDVGLPGKQMGNSEVGHLNLGAGRIVKQDFTRIYNELQNGDFFRNPILRNSLEYANDNNKAIHIMGLLSDGGVHSHEEQIHAMLEMTSRQGCKNVYLHIFTDGRDCAQKSAKKYIKKLESKMKELNTGEIVSLIGRYFSMDRDNRWSRIRYAYELIAKGKAKFLAKSALNAIELAYARGETDEFIQSTSIKAPTSIKKGDVLILMNYRADRARQITCAFTDEDFQGFSRGTFVPTQFVCLTEYKKDFNLPVAYPSSKLNNVLGKYLSNLGMTQLRIAETEKYAHVTFFLNGGIEQAFNGEERVLIPSPDVATYDLQPEMSAFELTDALVENIESQKYDLIICNFANTDMVGHSGKLDATIKAVEAVDTCLGIIYKAMFAIGGEMLITADHGNAEQMINPQTNEVHTAHTNNPVPLIFVSNRKADIMKPGKGALSDIAPTLLAMMDIEKPDEMTGNSLLTFK</sequence>
<gene>
    <name evidence="1" type="primary">gpmI</name>
    <name type="ordered locus">COSY_0969</name>
</gene>
<comment type="function">
    <text evidence="1">Catalyzes the interconversion of 2-phosphoglycerate and 3-phosphoglycerate.</text>
</comment>
<comment type="catalytic activity">
    <reaction evidence="1">
        <text>(2R)-2-phosphoglycerate = (2R)-3-phosphoglycerate</text>
        <dbReference type="Rhea" id="RHEA:15901"/>
        <dbReference type="ChEBI" id="CHEBI:58272"/>
        <dbReference type="ChEBI" id="CHEBI:58289"/>
        <dbReference type="EC" id="5.4.2.12"/>
    </reaction>
</comment>
<comment type="cofactor">
    <cofactor evidence="1">
        <name>Mn(2+)</name>
        <dbReference type="ChEBI" id="CHEBI:29035"/>
    </cofactor>
    <text evidence="1">Binds 2 manganese ions per subunit.</text>
</comment>
<comment type="pathway">
    <text evidence="1">Carbohydrate degradation; glycolysis; pyruvate from D-glyceraldehyde 3-phosphate: step 3/5.</text>
</comment>
<comment type="subunit">
    <text evidence="1">Monomer.</text>
</comment>
<comment type="similarity">
    <text evidence="1">Belongs to the BPG-independent phosphoglycerate mutase family.</text>
</comment>
<evidence type="ECO:0000255" key="1">
    <source>
        <dbReference type="HAMAP-Rule" id="MF_01038"/>
    </source>
</evidence>
<keyword id="KW-0324">Glycolysis</keyword>
<keyword id="KW-0413">Isomerase</keyword>
<keyword id="KW-0464">Manganese</keyword>
<keyword id="KW-0479">Metal-binding</keyword>
<keyword id="KW-1185">Reference proteome</keyword>